<proteinExistence type="evidence at transcript level"/>
<sequence>MNIEKIMSSLEAKHPGESEYLQAVKEVLLSIEDIYNQHPEFEKSKIIERLVEPDRIFTFRVTWVDDKGEVQTNLGYRVQFNNAIGPYKGGIRFHASVNLSILKFLGFEQTFKNALTTLPMGGGKGGSDFSPRGKSDAEIMRFCQAFMLELWRHLGPDMDVPAGDIGVGGREVGYMFGMYKKLTREFTGTFTGKGLEFGGSLIRPEATGFGGLYFVNQMLQTKGIDIKGKTVAISGFGNVAWGAATKATELGAKVVTISGPDGYIYDPNGISGEKIDYMLELRASGNDIVAPYADEFPGSTFVAGKRPWEVKADIALPCATQNELNGEDAKNLIDNNVLCVGEISNMGCTPEAIDLFIEHKTMYAPGKAVNAGGVATSGLEMSQNAMHLSWSAAEVDEKLHSIMHGIHAQCVKYGTEPDGYINYVKGANIAGFMKVAHAMMGQGII</sequence>
<dbReference type="EC" id="1.4.1.2"/>
<dbReference type="EMBL" id="U78108">
    <property type="protein sequence ID" value="AAC26399.1"/>
    <property type="molecule type" value="Genomic_DNA"/>
</dbReference>
<dbReference type="EMBL" id="AP006841">
    <property type="protein sequence ID" value="BAD50378.1"/>
    <property type="molecule type" value="Genomic_DNA"/>
</dbReference>
<dbReference type="RefSeq" id="WP_011203378.1">
    <property type="nucleotide sequence ID" value="NC_006347.1"/>
</dbReference>
<dbReference type="RefSeq" id="YP_100912.1">
    <property type="nucleotide sequence ID" value="NC_006347.1"/>
</dbReference>
<dbReference type="SMR" id="P94316"/>
<dbReference type="STRING" id="295405.BF3635"/>
<dbReference type="KEGG" id="bfr:BF3635"/>
<dbReference type="PATRIC" id="fig|295405.11.peg.3488"/>
<dbReference type="HOGENOM" id="CLU_025763_2_1_10"/>
<dbReference type="OrthoDB" id="9803297at2"/>
<dbReference type="Proteomes" id="UP000002197">
    <property type="component" value="Chromosome"/>
</dbReference>
<dbReference type="GO" id="GO:0005829">
    <property type="term" value="C:cytosol"/>
    <property type="evidence" value="ECO:0007669"/>
    <property type="project" value="TreeGrafter"/>
</dbReference>
<dbReference type="GO" id="GO:0004352">
    <property type="term" value="F:glutamate dehydrogenase (NAD+) activity"/>
    <property type="evidence" value="ECO:0007669"/>
    <property type="project" value="UniProtKB-EC"/>
</dbReference>
<dbReference type="GO" id="GO:0004354">
    <property type="term" value="F:glutamate dehydrogenase (NADP+) activity"/>
    <property type="evidence" value="ECO:0007669"/>
    <property type="project" value="TreeGrafter"/>
</dbReference>
<dbReference type="GO" id="GO:0006537">
    <property type="term" value="P:glutamate biosynthetic process"/>
    <property type="evidence" value="ECO:0007669"/>
    <property type="project" value="TreeGrafter"/>
</dbReference>
<dbReference type="CDD" id="cd05313">
    <property type="entry name" value="NAD_bind_2_Glu_DH"/>
    <property type="match status" value="1"/>
</dbReference>
<dbReference type="FunFam" id="1.10.285.10:FF:000001">
    <property type="entry name" value="Glutamate dehydrogenase"/>
    <property type="match status" value="1"/>
</dbReference>
<dbReference type="FunFam" id="3.40.50.10860:FF:000002">
    <property type="entry name" value="Glutamate dehydrogenase"/>
    <property type="match status" value="1"/>
</dbReference>
<dbReference type="FunFam" id="3.40.50.720:FF:000030">
    <property type="entry name" value="Glutamate dehydrogenase"/>
    <property type="match status" value="1"/>
</dbReference>
<dbReference type="Gene3D" id="1.10.285.10">
    <property type="entry name" value="Glutamate Dehydrogenase, chain A, domain 3"/>
    <property type="match status" value="2"/>
</dbReference>
<dbReference type="Gene3D" id="3.40.50.10860">
    <property type="entry name" value="Leucine Dehydrogenase, chain A, domain 1"/>
    <property type="match status" value="1"/>
</dbReference>
<dbReference type="Gene3D" id="3.40.50.720">
    <property type="entry name" value="NAD(P)-binding Rossmann-like Domain"/>
    <property type="match status" value="1"/>
</dbReference>
<dbReference type="InterPro" id="IPR046346">
    <property type="entry name" value="Aminoacid_DH-like_N_sf"/>
</dbReference>
<dbReference type="InterPro" id="IPR006095">
    <property type="entry name" value="Glu/Leu/Phe/Val/Trp_DH"/>
</dbReference>
<dbReference type="InterPro" id="IPR006096">
    <property type="entry name" value="Glu/Leu/Phe/Val/Trp_DH_C"/>
</dbReference>
<dbReference type="InterPro" id="IPR006097">
    <property type="entry name" value="Glu/Leu/Phe/Val/Trp_DH_dimer"/>
</dbReference>
<dbReference type="InterPro" id="IPR033524">
    <property type="entry name" value="Glu/Leu/Phe/Val_DH_AS"/>
</dbReference>
<dbReference type="InterPro" id="IPR014362">
    <property type="entry name" value="Glu_DH"/>
</dbReference>
<dbReference type="InterPro" id="IPR050724">
    <property type="entry name" value="Glu_Leu_Phe_Val_DH"/>
</dbReference>
<dbReference type="InterPro" id="IPR036291">
    <property type="entry name" value="NAD(P)-bd_dom_sf"/>
</dbReference>
<dbReference type="InterPro" id="IPR033922">
    <property type="entry name" value="NAD_bind_Glu_DH"/>
</dbReference>
<dbReference type="NCBIfam" id="NF006929">
    <property type="entry name" value="PRK09414.1"/>
    <property type="match status" value="1"/>
</dbReference>
<dbReference type="NCBIfam" id="NF010633">
    <property type="entry name" value="PRK14030.1"/>
    <property type="match status" value="1"/>
</dbReference>
<dbReference type="PANTHER" id="PTHR43571">
    <property type="entry name" value="NADP-SPECIFIC GLUTAMATE DEHYDROGENASE 1-RELATED"/>
    <property type="match status" value="1"/>
</dbReference>
<dbReference type="PANTHER" id="PTHR43571:SF1">
    <property type="entry name" value="NADP-SPECIFIC GLUTAMATE DEHYDROGENASE 1-RELATED"/>
    <property type="match status" value="1"/>
</dbReference>
<dbReference type="Pfam" id="PF00208">
    <property type="entry name" value="ELFV_dehydrog"/>
    <property type="match status" value="1"/>
</dbReference>
<dbReference type="Pfam" id="PF02812">
    <property type="entry name" value="ELFV_dehydrog_N"/>
    <property type="match status" value="1"/>
</dbReference>
<dbReference type="PIRSF" id="PIRSF000185">
    <property type="entry name" value="Glu_DH"/>
    <property type="match status" value="1"/>
</dbReference>
<dbReference type="PRINTS" id="PR00082">
    <property type="entry name" value="GLFDHDRGNASE"/>
</dbReference>
<dbReference type="SMART" id="SM00839">
    <property type="entry name" value="ELFV_dehydrog"/>
    <property type="match status" value="1"/>
</dbReference>
<dbReference type="SUPFAM" id="SSF53223">
    <property type="entry name" value="Aminoacid dehydrogenase-like, N-terminal domain"/>
    <property type="match status" value="1"/>
</dbReference>
<dbReference type="SUPFAM" id="SSF51735">
    <property type="entry name" value="NAD(P)-binding Rossmann-fold domains"/>
    <property type="match status" value="1"/>
</dbReference>
<dbReference type="PROSITE" id="PS00074">
    <property type="entry name" value="GLFV_DEHYDROGENASE"/>
    <property type="match status" value="1"/>
</dbReference>
<organism>
    <name type="scientific">Bacteroides fragilis (strain YCH46)</name>
    <dbReference type="NCBI Taxonomy" id="295405"/>
    <lineage>
        <taxon>Bacteria</taxon>
        <taxon>Pseudomonadati</taxon>
        <taxon>Bacteroidota</taxon>
        <taxon>Bacteroidia</taxon>
        <taxon>Bacteroidales</taxon>
        <taxon>Bacteroidaceae</taxon>
        <taxon>Bacteroides</taxon>
    </lineage>
</organism>
<accession>P94316</accession>
<accession>Q64Q53</accession>
<evidence type="ECO:0000250" key="1"/>
<evidence type="ECO:0000255" key="2"/>
<evidence type="ECO:0000255" key="3">
    <source>
        <dbReference type="PROSITE-ProRule" id="PRU10011"/>
    </source>
</evidence>
<evidence type="ECO:0000305" key="4"/>
<protein>
    <recommendedName>
        <fullName>NAD-specific glutamate dehydrogenase</fullName>
        <shortName>NAD-GDH</shortName>
        <ecNumber>1.4.1.2</ecNumber>
    </recommendedName>
    <alternativeName>
        <fullName>NADH-dependent glutamate dehydrogenase</fullName>
    </alternativeName>
</protein>
<keyword id="KW-0520">NAD</keyword>
<keyword id="KW-0560">Oxidoreductase</keyword>
<name>DHE2_BACFR</name>
<gene>
    <name type="primary">gdhB</name>
    <name type="ordered locus">BF3635</name>
</gene>
<comment type="catalytic activity">
    <reaction>
        <text>L-glutamate + NAD(+) + H2O = 2-oxoglutarate + NH4(+) + NADH + H(+)</text>
        <dbReference type="Rhea" id="RHEA:15133"/>
        <dbReference type="ChEBI" id="CHEBI:15377"/>
        <dbReference type="ChEBI" id="CHEBI:15378"/>
        <dbReference type="ChEBI" id="CHEBI:16810"/>
        <dbReference type="ChEBI" id="CHEBI:28938"/>
        <dbReference type="ChEBI" id="CHEBI:29985"/>
        <dbReference type="ChEBI" id="CHEBI:57540"/>
        <dbReference type="ChEBI" id="CHEBI:57945"/>
        <dbReference type="EC" id="1.4.1.2"/>
    </reaction>
</comment>
<comment type="subunit">
    <text evidence="1">Homohexamer.</text>
</comment>
<comment type="induction">
    <text>By high peptide concentrations.</text>
</comment>
<comment type="similarity">
    <text evidence="4">Belongs to the Glu/Leu/Phe/Val dehydrogenases family.</text>
</comment>
<feature type="chain" id="PRO_0000182765" description="NAD-specific glutamate dehydrogenase">
    <location>
        <begin position="1"/>
        <end position="445"/>
    </location>
</feature>
<feature type="active site" evidence="3">
    <location>
        <position position="124"/>
    </location>
</feature>
<feature type="binding site" evidence="2">
    <location>
        <begin position="235"/>
        <end position="241"/>
    </location>
    <ligand>
        <name>NAD(+)</name>
        <dbReference type="ChEBI" id="CHEBI:57540"/>
    </ligand>
</feature>
<feature type="sequence conflict" description="In Ref. 1; AAC26399." evidence="4" ref="1">
    <original>S</original>
    <variation>A</variation>
    <location>
        <position position="44"/>
    </location>
</feature>
<reference key="1">
    <citation type="journal article" date="1998" name="Microbiology">
        <title>The NADH-dependent glutamate dehydrogenase enzyme of Bacteroides fragilis Bf1 is induced by peptides in the growth medium.</title>
        <authorList>
            <person name="Abrahams G.L."/>
            <person name="Abratt V.R."/>
        </authorList>
    </citation>
    <scope>NUCLEOTIDE SEQUENCE [GENOMIC DNA]</scope>
    <source>
        <strain>BF1</strain>
    </source>
</reference>
<reference key="2">
    <citation type="journal article" date="2004" name="Proc. Natl. Acad. Sci. U.S.A.">
        <title>Genomic analysis of Bacteroides fragilis reveals extensive DNA inversions regulating cell surface adaptation.</title>
        <authorList>
            <person name="Kuwahara T."/>
            <person name="Yamashita A."/>
            <person name="Hirakawa H."/>
            <person name="Nakayama H."/>
            <person name="Toh H."/>
            <person name="Okada N."/>
            <person name="Kuhara S."/>
            <person name="Hattori M."/>
            <person name="Hayashi T."/>
            <person name="Ohnishi Y."/>
        </authorList>
    </citation>
    <scope>NUCLEOTIDE SEQUENCE [LARGE SCALE GENOMIC DNA]</scope>
    <source>
        <strain>YCH46</strain>
    </source>
</reference>